<accession>O60361</accession>
<feature type="chain" id="PRO_0000137133" description="Putative nucleoside diphosphate kinase">
    <location>
        <begin position="1"/>
        <end position="137"/>
    </location>
</feature>
<feature type="active site" description="Pros-phosphohistidine intermediate" evidence="2">
    <location>
        <position position="103"/>
    </location>
</feature>
<feature type="binding site" evidence="1">
    <location>
        <position position="45"/>
    </location>
    <ligand>
        <name>ATP</name>
        <dbReference type="ChEBI" id="CHEBI:30616"/>
    </ligand>
</feature>
<feature type="binding site" evidence="1">
    <location>
        <position position="73"/>
    </location>
    <ligand>
        <name>ATP</name>
        <dbReference type="ChEBI" id="CHEBI:30616"/>
    </ligand>
</feature>
<feature type="binding site" evidence="1">
    <location>
        <position position="79"/>
    </location>
    <ligand>
        <name>ATP</name>
        <dbReference type="ChEBI" id="CHEBI:30616"/>
    </ligand>
</feature>
<feature type="binding site" evidence="1">
    <location>
        <position position="90"/>
    </location>
    <ligand>
        <name>ATP</name>
        <dbReference type="ChEBI" id="CHEBI:30616"/>
    </ligand>
</feature>
<feature type="binding site" evidence="1">
    <location>
        <position position="100"/>
    </location>
    <ligand>
        <name>ATP</name>
        <dbReference type="ChEBI" id="CHEBI:30616"/>
    </ligand>
</feature>
<name>NDK8_HUMAN</name>
<sequence length="137" mass="15529">MQCGLVGKIIKRFEQKGFRLVAMKFLPASEEHLKQHYIDLKDRPFFPGLVKYMNSGPVVAMVWEGLNVVKTGRVMLGETNPADSKPGTIRGDFCIQVGRNIIHGSDSVKSAEKEISLRFKPEELVDYKSCAHDWVYE</sequence>
<comment type="function">
    <text evidence="1">Major role in the synthesis of nucleoside triphosphates other than ATP. The ATP gamma phosphate is transferred to the NDP beta phosphate via a ping-pong mechanism, using a phosphorylated active-site intermediate (By similarity).</text>
</comment>
<comment type="catalytic activity">
    <reaction evidence="2">
        <text>a 2'-deoxyribonucleoside 5'-diphosphate + ATP = a 2'-deoxyribonucleoside 5'-triphosphate + ADP</text>
        <dbReference type="Rhea" id="RHEA:44640"/>
        <dbReference type="ChEBI" id="CHEBI:30616"/>
        <dbReference type="ChEBI" id="CHEBI:61560"/>
        <dbReference type="ChEBI" id="CHEBI:73316"/>
        <dbReference type="ChEBI" id="CHEBI:456216"/>
        <dbReference type="EC" id="2.7.4.6"/>
    </reaction>
</comment>
<comment type="catalytic activity">
    <reaction evidence="2">
        <text>a ribonucleoside 5'-diphosphate + ATP = a ribonucleoside 5'-triphosphate + ADP</text>
        <dbReference type="Rhea" id="RHEA:18113"/>
        <dbReference type="ChEBI" id="CHEBI:30616"/>
        <dbReference type="ChEBI" id="CHEBI:57930"/>
        <dbReference type="ChEBI" id="CHEBI:61557"/>
        <dbReference type="ChEBI" id="CHEBI:456216"/>
        <dbReference type="EC" id="2.7.4.6"/>
    </reaction>
</comment>
<comment type="cofactor">
    <cofactor evidence="1">
        <name>Mg(2+)</name>
        <dbReference type="ChEBI" id="CHEBI:18420"/>
    </cofactor>
</comment>
<comment type="interaction">
    <interactant intactId="EBI-2558379">
        <id>O60361</id>
    </interactant>
    <interactant intactId="EBI-9091272">
        <id>Q8NCR9</id>
        <label>CLRN3</label>
    </interactant>
    <organismsDiffer>false</organismsDiffer>
    <experiments>2</experiments>
</comment>
<comment type="interaction">
    <interactant intactId="EBI-2558379">
        <id>O60361</id>
    </interactant>
    <interactant intactId="EBI-13291307">
        <id>O95237</id>
        <label>LRAT</label>
    </interactant>
    <organismsDiffer>false</organismsDiffer>
    <experiments>2</experiments>
</comment>
<comment type="interaction">
    <interactant intactId="EBI-2558379">
        <id>O60361</id>
    </interactant>
    <interactant intactId="EBI-726491">
        <id>Q9NY26</id>
        <label>SLC39A1</label>
    </interactant>
    <organismsDiffer>false</organismsDiffer>
    <experiments>2</experiments>
</comment>
<comment type="interaction">
    <interactant intactId="EBI-2558379">
        <id>O60361</id>
    </interactant>
    <interactant intactId="EBI-988826">
        <id>Q9Y385</id>
        <label>UBE2J1</label>
    </interactant>
    <organismsDiffer>false</organismsDiffer>
    <experiments>2</experiments>
</comment>
<comment type="interaction">
    <interactant intactId="EBI-2558379">
        <id>O60361</id>
    </interactant>
    <interactant intactId="EBI-21771810">
        <id>P25874</id>
        <label>UCP1</label>
    </interactant>
    <organismsDiffer>false</organismsDiffer>
    <experiments>2</experiments>
</comment>
<comment type="similarity">
    <text evidence="3">Belongs to the NDK family.</text>
</comment>
<comment type="caution">
    <text evidence="3">Could be the product of a pseudogene.</text>
</comment>
<organism>
    <name type="scientific">Homo sapiens</name>
    <name type="common">Human</name>
    <dbReference type="NCBI Taxonomy" id="9606"/>
    <lineage>
        <taxon>Eukaryota</taxon>
        <taxon>Metazoa</taxon>
        <taxon>Chordata</taxon>
        <taxon>Craniata</taxon>
        <taxon>Vertebrata</taxon>
        <taxon>Euteleostomi</taxon>
        <taxon>Mammalia</taxon>
        <taxon>Eutheria</taxon>
        <taxon>Euarchontoglires</taxon>
        <taxon>Primates</taxon>
        <taxon>Haplorrhini</taxon>
        <taxon>Catarrhini</taxon>
        <taxon>Hominidae</taxon>
        <taxon>Homo</taxon>
    </lineage>
</organism>
<dbReference type="EC" id="2.7.4.6"/>
<dbReference type="EMBL" id="AC004263">
    <property type="protein sequence ID" value="AAC05177.1"/>
    <property type="molecule type" value="Genomic_DNA"/>
</dbReference>
<dbReference type="SMR" id="O60361"/>
<dbReference type="FunCoup" id="O60361">
    <property type="interactions" value="816"/>
</dbReference>
<dbReference type="IntAct" id="O60361">
    <property type="interactions" value="85"/>
</dbReference>
<dbReference type="ChEMBL" id="CHEMBL4105936"/>
<dbReference type="GlyGen" id="O60361">
    <property type="glycosylation" value="1 site, 1 O-linked glycan (1 site)"/>
</dbReference>
<dbReference type="iPTMnet" id="O60361"/>
<dbReference type="MetOSite" id="O60361"/>
<dbReference type="PhosphoSitePlus" id="O60361"/>
<dbReference type="SwissPalm" id="O60361"/>
<dbReference type="BioMuta" id="HGNC:31358"/>
<dbReference type="jPOST" id="O60361"/>
<dbReference type="MassIVE" id="O60361"/>
<dbReference type="PeptideAtlas" id="O60361"/>
<dbReference type="ProteomicsDB" id="49381"/>
<dbReference type="Pumba" id="O60361"/>
<dbReference type="AGR" id="HGNC:31358"/>
<dbReference type="GeneCards" id="NME2P1"/>
<dbReference type="HGNC" id="HGNC:31358">
    <property type="gene designation" value="NME2P1"/>
</dbReference>
<dbReference type="neXtProt" id="NX_O60361"/>
<dbReference type="InParanoid" id="O60361"/>
<dbReference type="PAN-GO" id="O60361">
    <property type="GO annotations" value="2 GO annotations based on evolutionary models"/>
</dbReference>
<dbReference type="PhylomeDB" id="O60361"/>
<dbReference type="PathwayCommons" id="O60361"/>
<dbReference type="Reactome" id="R-HSA-499943">
    <property type="pathway name" value="Interconversion of nucleotide di- and triphosphates"/>
</dbReference>
<dbReference type="SignaLink" id="O60361"/>
<dbReference type="ChiTaRS" id="NME2P1">
    <property type="organism name" value="human"/>
</dbReference>
<dbReference type="Pharos" id="O60361">
    <property type="development level" value="Tdark"/>
</dbReference>
<dbReference type="PRO" id="PR:O60361"/>
<dbReference type="Proteomes" id="UP000005640">
    <property type="component" value="Unplaced"/>
</dbReference>
<dbReference type="RNAct" id="O60361">
    <property type="molecule type" value="protein"/>
</dbReference>
<dbReference type="GO" id="GO:0070062">
    <property type="term" value="C:extracellular exosome"/>
    <property type="evidence" value="ECO:0007005"/>
    <property type="project" value="UniProtKB"/>
</dbReference>
<dbReference type="GO" id="GO:0005634">
    <property type="term" value="C:nucleus"/>
    <property type="evidence" value="ECO:0007005"/>
    <property type="project" value="UniProtKB"/>
</dbReference>
<dbReference type="GO" id="GO:0005524">
    <property type="term" value="F:ATP binding"/>
    <property type="evidence" value="ECO:0007669"/>
    <property type="project" value="UniProtKB-KW"/>
</dbReference>
<dbReference type="GO" id="GO:0046872">
    <property type="term" value="F:metal ion binding"/>
    <property type="evidence" value="ECO:0007669"/>
    <property type="project" value="UniProtKB-KW"/>
</dbReference>
<dbReference type="GO" id="GO:0004550">
    <property type="term" value="F:nucleoside diphosphate kinase activity"/>
    <property type="evidence" value="ECO:0007669"/>
    <property type="project" value="UniProtKB-EC"/>
</dbReference>
<dbReference type="GO" id="GO:0006241">
    <property type="term" value="P:CTP biosynthetic process"/>
    <property type="evidence" value="ECO:0007669"/>
    <property type="project" value="InterPro"/>
</dbReference>
<dbReference type="GO" id="GO:0006183">
    <property type="term" value="P:GTP biosynthetic process"/>
    <property type="evidence" value="ECO:0007669"/>
    <property type="project" value="InterPro"/>
</dbReference>
<dbReference type="GO" id="GO:0042981">
    <property type="term" value="P:regulation of apoptotic process"/>
    <property type="evidence" value="ECO:0000318"/>
    <property type="project" value="GO_Central"/>
</dbReference>
<dbReference type="GO" id="GO:0006228">
    <property type="term" value="P:UTP biosynthetic process"/>
    <property type="evidence" value="ECO:0007669"/>
    <property type="project" value="InterPro"/>
</dbReference>
<dbReference type="CDD" id="cd04413">
    <property type="entry name" value="NDPk_I"/>
    <property type="match status" value="1"/>
</dbReference>
<dbReference type="FunFam" id="3.30.70.141:FF:000015">
    <property type="entry name" value="Nucleoside diphosphate kinase B"/>
    <property type="match status" value="1"/>
</dbReference>
<dbReference type="Gene3D" id="3.30.70.141">
    <property type="entry name" value="Nucleoside diphosphate kinase-like domain"/>
    <property type="match status" value="1"/>
</dbReference>
<dbReference type="InterPro" id="IPR034907">
    <property type="entry name" value="NDK-like_dom"/>
</dbReference>
<dbReference type="InterPro" id="IPR036850">
    <property type="entry name" value="NDK-like_dom_sf"/>
</dbReference>
<dbReference type="InterPro" id="IPR001564">
    <property type="entry name" value="Nucleoside_diP_kinase"/>
</dbReference>
<dbReference type="InterPro" id="IPR023005">
    <property type="entry name" value="Nucleoside_diP_kinase_AS"/>
</dbReference>
<dbReference type="NCBIfam" id="NF001908">
    <property type="entry name" value="PRK00668.1"/>
    <property type="match status" value="1"/>
</dbReference>
<dbReference type="PANTHER" id="PTHR11349">
    <property type="entry name" value="NUCLEOSIDE DIPHOSPHATE KINASE"/>
    <property type="match status" value="1"/>
</dbReference>
<dbReference type="Pfam" id="PF00334">
    <property type="entry name" value="NDK"/>
    <property type="match status" value="1"/>
</dbReference>
<dbReference type="PRINTS" id="PR01243">
    <property type="entry name" value="NUCDPKINASE"/>
</dbReference>
<dbReference type="SMART" id="SM00562">
    <property type="entry name" value="NDK"/>
    <property type="match status" value="1"/>
</dbReference>
<dbReference type="SUPFAM" id="SSF54919">
    <property type="entry name" value="Nucleoside diphosphate kinase, NDK"/>
    <property type="match status" value="1"/>
</dbReference>
<dbReference type="PROSITE" id="PS00469">
    <property type="entry name" value="NDPK"/>
    <property type="match status" value="1"/>
</dbReference>
<dbReference type="PROSITE" id="PS51374">
    <property type="entry name" value="NDPK_LIKE"/>
    <property type="match status" value="1"/>
</dbReference>
<evidence type="ECO:0000250" key="1"/>
<evidence type="ECO:0000255" key="2">
    <source>
        <dbReference type="PROSITE-ProRule" id="PRU10030"/>
    </source>
</evidence>
<evidence type="ECO:0000305" key="3"/>
<keyword id="KW-0067">ATP-binding</keyword>
<keyword id="KW-0418">Kinase</keyword>
<keyword id="KW-0460">Magnesium</keyword>
<keyword id="KW-0479">Metal-binding</keyword>
<keyword id="KW-0546">Nucleotide metabolism</keyword>
<keyword id="KW-0547">Nucleotide-binding</keyword>
<keyword id="KW-1185">Reference proteome</keyword>
<keyword id="KW-0808">Transferase</keyword>
<protein>
    <recommendedName>
        <fullName>Putative nucleoside diphosphate kinase</fullName>
        <shortName>NDK</shortName>
        <shortName>NDP kinase</shortName>
        <ecNumber>2.7.4.6</ecNumber>
    </recommendedName>
</protein>
<reference key="1">
    <citation type="journal article" date="2006" name="Nature">
        <title>The finished DNA sequence of human chromosome 12.</title>
        <authorList>
            <person name="Scherer S.E."/>
            <person name="Muzny D.M."/>
            <person name="Buhay C.J."/>
            <person name="Chen R."/>
            <person name="Cree A."/>
            <person name="Ding Y."/>
            <person name="Dugan-Rocha S."/>
            <person name="Gill R."/>
            <person name="Gunaratne P."/>
            <person name="Harris R.A."/>
            <person name="Hawes A.C."/>
            <person name="Hernandez J."/>
            <person name="Hodgson A.V."/>
            <person name="Hume J."/>
            <person name="Jackson A."/>
            <person name="Khan Z.M."/>
            <person name="Kovar-Smith C."/>
            <person name="Lewis L.R."/>
            <person name="Lozado R.J."/>
            <person name="Metzker M.L."/>
            <person name="Milosavljevic A."/>
            <person name="Miner G.R."/>
            <person name="Montgomery K.T."/>
            <person name="Morgan M.B."/>
            <person name="Nazareth L.V."/>
            <person name="Scott G."/>
            <person name="Sodergren E."/>
            <person name="Song X.-Z."/>
            <person name="Steffen D."/>
            <person name="Lovering R.C."/>
            <person name="Wheeler D.A."/>
            <person name="Worley K.C."/>
            <person name="Yuan Y."/>
            <person name="Zhang Z."/>
            <person name="Adams C.Q."/>
            <person name="Ansari-Lari M.A."/>
            <person name="Ayele M."/>
            <person name="Brown M.J."/>
            <person name="Chen G."/>
            <person name="Chen Z."/>
            <person name="Clerc-Blankenburg K.P."/>
            <person name="Davis C."/>
            <person name="Delgado O."/>
            <person name="Dinh H.H."/>
            <person name="Draper H."/>
            <person name="Gonzalez-Garay M.L."/>
            <person name="Havlak P."/>
            <person name="Jackson L.R."/>
            <person name="Jacob L.S."/>
            <person name="Kelly S.H."/>
            <person name="Li L."/>
            <person name="Li Z."/>
            <person name="Liu J."/>
            <person name="Liu W."/>
            <person name="Lu J."/>
            <person name="Maheshwari M."/>
            <person name="Nguyen B.-V."/>
            <person name="Okwuonu G.O."/>
            <person name="Pasternak S."/>
            <person name="Perez L.M."/>
            <person name="Plopper F.J.H."/>
            <person name="Santibanez J."/>
            <person name="Shen H."/>
            <person name="Tabor P.E."/>
            <person name="Verduzco D."/>
            <person name="Waldron L."/>
            <person name="Wang Q."/>
            <person name="Williams G.A."/>
            <person name="Zhang J."/>
            <person name="Zhou J."/>
            <person name="Allen C.C."/>
            <person name="Amin A.G."/>
            <person name="Anyalebechi V."/>
            <person name="Bailey M."/>
            <person name="Barbaria J.A."/>
            <person name="Bimage K.E."/>
            <person name="Bryant N.P."/>
            <person name="Burch P.E."/>
            <person name="Burkett C.E."/>
            <person name="Burrell K.L."/>
            <person name="Calderon E."/>
            <person name="Cardenas V."/>
            <person name="Carter K."/>
            <person name="Casias K."/>
            <person name="Cavazos I."/>
            <person name="Cavazos S.R."/>
            <person name="Ceasar H."/>
            <person name="Chacko J."/>
            <person name="Chan S.N."/>
            <person name="Chavez D."/>
            <person name="Christopoulos C."/>
            <person name="Chu J."/>
            <person name="Cockrell R."/>
            <person name="Cox C.D."/>
            <person name="Dang M."/>
            <person name="Dathorne S.R."/>
            <person name="David R."/>
            <person name="Davis C.M."/>
            <person name="Davy-Carroll L."/>
            <person name="Deshazo D.R."/>
            <person name="Donlin J.E."/>
            <person name="D'Souza L."/>
            <person name="Eaves K.A."/>
            <person name="Egan A."/>
            <person name="Emery-Cohen A.J."/>
            <person name="Escotto M."/>
            <person name="Flagg N."/>
            <person name="Forbes L.D."/>
            <person name="Gabisi A.M."/>
            <person name="Garza M."/>
            <person name="Hamilton C."/>
            <person name="Henderson N."/>
            <person name="Hernandez O."/>
            <person name="Hines S."/>
            <person name="Hogues M.E."/>
            <person name="Huang M."/>
            <person name="Idlebird D.G."/>
            <person name="Johnson R."/>
            <person name="Jolivet A."/>
            <person name="Jones S."/>
            <person name="Kagan R."/>
            <person name="King L.M."/>
            <person name="Leal B."/>
            <person name="Lebow H."/>
            <person name="Lee S."/>
            <person name="LeVan J.M."/>
            <person name="Lewis L.C."/>
            <person name="London P."/>
            <person name="Lorensuhewa L.M."/>
            <person name="Loulseged H."/>
            <person name="Lovett D.A."/>
            <person name="Lucier A."/>
            <person name="Lucier R.L."/>
            <person name="Ma J."/>
            <person name="Madu R.C."/>
            <person name="Mapua P."/>
            <person name="Martindale A.D."/>
            <person name="Martinez E."/>
            <person name="Massey E."/>
            <person name="Mawhiney S."/>
            <person name="Meador M.G."/>
            <person name="Mendez S."/>
            <person name="Mercado C."/>
            <person name="Mercado I.C."/>
            <person name="Merritt C.E."/>
            <person name="Miner Z.L."/>
            <person name="Minja E."/>
            <person name="Mitchell T."/>
            <person name="Mohabbat F."/>
            <person name="Mohabbat K."/>
            <person name="Montgomery B."/>
            <person name="Moore N."/>
            <person name="Morris S."/>
            <person name="Munidasa M."/>
            <person name="Ngo R.N."/>
            <person name="Nguyen N.B."/>
            <person name="Nickerson E."/>
            <person name="Nwaokelemeh O.O."/>
            <person name="Nwokenkwo S."/>
            <person name="Obregon M."/>
            <person name="Oguh M."/>
            <person name="Oragunye N."/>
            <person name="Oviedo R.J."/>
            <person name="Parish B.J."/>
            <person name="Parker D.N."/>
            <person name="Parrish J."/>
            <person name="Parks K.L."/>
            <person name="Paul H.A."/>
            <person name="Payton B.A."/>
            <person name="Perez A."/>
            <person name="Perrin W."/>
            <person name="Pickens A."/>
            <person name="Primus E.L."/>
            <person name="Pu L.-L."/>
            <person name="Puazo M."/>
            <person name="Quiles M.M."/>
            <person name="Quiroz J.B."/>
            <person name="Rabata D."/>
            <person name="Reeves K."/>
            <person name="Ruiz S.J."/>
            <person name="Shao H."/>
            <person name="Sisson I."/>
            <person name="Sonaike T."/>
            <person name="Sorelle R.P."/>
            <person name="Sutton A.E."/>
            <person name="Svatek A.F."/>
            <person name="Svetz L.A."/>
            <person name="Tamerisa K.S."/>
            <person name="Taylor T.R."/>
            <person name="Teague B."/>
            <person name="Thomas N."/>
            <person name="Thorn R.D."/>
            <person name="Trejos Z.Y."/>
            <person name="Trevino B.K."/>
            <person name="Ukegbu O.N."/>
            <person name="Urban J.B."/>
            <person name="Vasquez L.I."/>
            <person name="Vera V.A."/>
            <person name="Villasana D.M."/>
            <person name="Wang L."/>
            <person name="Ward-Moore S."/>
            <person name="Warren J.T."/>
            <person name="Wei X."/>
            <person name="White F."/>
            <person name="Williamson A.L."/>
            <person name="Wleczyk R."/>
            <person name="Wooden H.S."/>
            <person name="Wooden S.H."/>
            <person name="Yen J."/>
            <person name="Yoon L."/>
            <person name="Yoon V."/>
            <person name="Zorrilla S.E."/>
            <person name="Nelson D."/>
            <person name="Kucherlapati R."/>
            <person name="Weinstock G."/>
            <person name="Gibbs R.A."/>
        </authorList>
    </citation>
    <scope>NUCLEOTIDE SEQUENCE [LARGE SCALE GENOMIC DNA]</scope>
</reference>
<proteinExistence type="uncertain"/>
<gene>
    <name type="primary">NME2P1</name>
</gene>